<feature type="signal peptide" evidence="1">
    <location>
        <begin position="1"/>
        <end position="14"/>
    </location>
</feature>
<feature type="chain" id="PRO_0000248215" description="Tensin-4">
    <location>
        <begin position="15"/>
        <end position="718"/>
    </location>
</feature>
<feature type="domain" description="SH2" evidence="4">
    <location>
        <begin position="451"/>
        <end position="558"/>
    </location>
</feature>
<feature type="domain" description="PTB" evidence="3">
    <location>
        <begin position="585"/>
        <end position="711"/>
    </location>
</feature>
<feature type="region of interest" description="Disordered" evidence="5">
    <location>
        <begin position="188"/>
        <end position="244"/>
    </location>
</feature>
<feature type="region of interest" description="Disordered" evidence="5">
    <location>
        <begin position="272"/>
        <end position="437"/>
    </location>
</feature>
<feature type="compositionally biased region" description="Polar residues" evidence="5">
    <location>
        <begin position="192"/>
        <end position="207"/>
    </location>
</feature>
<feature type="compositionally biased region" description="Low complexity" evidence="5">
    <location>
        <begin position="208"/>
        <end position="219"/>
    </location>
</feature>
<feature type="compositionally biased region" description="Low complexity" evidence="5">
    <location>
        <begin position="272"/>
        <end position="304"/>
    </location>
</feature>
<feature type="compositionally biased region" description="Polar residues" evidence="5">
    <location>
        <begin position="306"/>
        <end position="316"/>
    </location>
</feature>
<feature type="compositionally biased region" description="Polar residues" evidence="5">
    <location>
        <begin position="337"/>
        <end position="349"/>
    </location>
</feature>
<feature type="compositionally biased region" description="Polar residues" evidence="5">
    <location>
        <begin position="367"/>
        <end position="393"/>
    </location>
</feature>
<feature type="compositionally biased region" description="Polar residues" evidence="5">
    <location>
        <begin position="405"/>
        <end position="415"/>
    </location>
</feature>
<feature type="modified residue" description="Phosphoserine" evidence="2">
    <location>
        <position position="230"/>
    </location>
</feature>
<feature type="sequence conflict" description="In Ref. 2; AAH97378." evidence="6" ref="2">
    <original>F</original>
    <variation>L</variation>
    <location>
        <position position="452"/>
    </location>
</feature>
<organism>
    <name type="scientific">Rattus norvegicus</name>
    <name type="common">Rat</name>
    <dbReference type="NCBI Taxonomy" id="10116"/>
    <lineage>
        <taxon>Eukaryota</taxon>
        <taxon>Metazoa</taxon>
        <taxon>Chordata</taxon>
        <taxon>Craniata</taxon>
        <taxon>Vertebrata</taxon>
        <taxon>Euteleostomi</taxon>
        <taxon>Mammalia</taxon>
        <taxon>Eutheria</taxon>
        <taxon>Euarchontoglires</taxon>
        <taxon>Glires</taxon>
        <taxon>Rodentia</taxon>
        <taxon>Myomorpha</taxon>
        <taxon>Muroidea</taxon>
        <taxon>Muridae</taxon>
        <taxon>Murinae</taxon>
        <taxon>Rattus</taxon>
    </lineage>
</organism>
<keyword id="KW-0009">Actin-binding</keyword>
<keyword id="KW-0965">Cell junction</keyword>
<keyword id="KW-0963">Cytoplasm</keyword>
<keyword id="KW-0206">Cytoskeleton</keyword>
<keyword id="KW-0597">Phosphoprotein</keyword>
<keyword id="KW-1185">Reference proteome</keyword>
<keyword id="KW-0727">SH2 domain</keyword>
<keyword id="KW-0732">Signal</keyword>
<reference evidence="7" key="1">
    <citation type="submission" date="2005-07" db="EMBL/GenBank/DDBJ databases">
        <authorList>
            <person name="Mural R.J."/>
            <person name="Li P.W."/>
            <person name="Adams M.D."/>
            <person name="Amanatides P.G."/>
            <person name="Baden-Tillson H."/>
            <person name="Barnstead M."/>
            <person name="Chin S.H."/>
            <person name="Dew I."/>
            <person name="Evans C.A."/>
            <person name="Ferriera S."/>
            <person name="Flanigan M."/>
            <person name="Fosler C."/>
            <person name="Glodek A."/>
            <person name="Gu Z."/>
            <person name="Holt R.A."/>
            <person name="Jennings D."/>
            <person name="Kraft C.L."/>
            <person name="Lu F."/>
            <person name="Nguyen T."/>
            <person name="Nusskern D.R."/>
            <person name="Pfannkoch C.M."/>
            <person name="Sitter C."/>
            <person name="Sutton G.G."/>
            <person name="Venter J.C."/>
            <person name="Wang Z."/>
            <person name="Woodage T."/>
            <person name="Zheng X.H."/>
            <person name="Zhong F."/>
        </authorList>
    </citation>
    <scope>NUCLEOTIDE SEQUENCE [LARGE SCALE GENOMIC DNA]</scope>
</reference>
<reference key="2">
    <citation type="journal article" date="2004" name="Genome Res.">
        <title>The status, quality, and expansion of the NIH full-length cDNA project: the Mammalian Gene Collection (MGC).</title>
        <authorList>
            <consortium name="The MGC Project Team"/>
        </authorList>
    </citation>
    <scope>NUCLEOTIDE SEQUENCE [LARGE SCALE MRNA]</scope>
    <source>
        <tissue>Placenta</tissue>
    </source>
</reference>
<sequence>MSSSLLTGGHVVSLTPHEESRMALHPTPSHDLPALCPYYTTESWGTQPLMDPTLCKGSSNRLQQAQQAEARAQCLLQCPGEQASGASQDLDSCIDFSLEALNKMILELDPTFQLLPSGIAGPQAEPTNSVASRTKKEEPDALDIKYIEVTSTRSRCLDSPQRCSSPCVTPPFGSPRSGGLFLSRDIPRETRSSSNESLIFSGNQGRGSSPHTPSSLSNSIPCRESRASGSPLATPPGWEKGLRAPQWGSRVSTLSASPVSDISYVFGSNQSLPHSSLSSYPPSSRSLGSPASSSSSLHSLDRGSQCVRSSDAQVPSNPIVGMGQPQAVPSTPVAKEQASSCPPSVTNSMADIPIVLINGNPEPQSPPAQQTPRYQDSVQSRATSPSHLCQATKSHSKTLPDVPLTSPSHLCQATKSHSKTLPDVPLTASPESPAKDMQPTMKFVMDTSKYWFKPSITREQAINLLRTEKPGTFVIRDSSSYRGSFGLALKVQETPASAPNRPGEDSTDFIRHFLVESSAKGVHLKGADEEPYFGSLSAFVCQHSIMALALPCKLTIPQKELGGAEPASDSPTHGQTSCLKISAGCHTLYLTSVSVETLSGALAVQKAISVMLERDVLPTPTVVHFKVTEQGITLTDVQRKVFFRRHYPLIALRFCGMDPEQRKWQKYCKPSRIFGFVAKSQTEPQENACHLFAEYDAAQPASQVISLVTALLKDTERV</sequence>
<accession>Q4V8I3</accession>
<accession>G3V8W6</accession>
<comment type="function">
    <text evidence="2">Promotes EGF-induced cell migration by displacing tensin TNS3 from the cytoplasmic tail of integrin ITGB1 which results in dissociation of TNS3 from focal adhesions, disassembly of actin stress fibers and initiation of cell migration. Suppresses ligand-induced degradation of EGFR by reducing EGFR ubiquitination in the presence of EGF. Increases MET protein stability by inhibiting MET endocytosis and subsequent lysosomal degradation which leads to increased cell survival, proliferation and migration.</text>
</comment>
<comment type="subunit">
    <text evidence="2">Interacts (via SH2 domain) with Rho GTPase-activating protein DLC1 (via C-terminus); the interaction is independent of DLC1 tyrosine phosphorylation. Interacts with integrin ITGB1; the interaction displaces tensin TNS3 from the ITGB1 cytoplasmic tail and promotes ITGB1 stability. Interacts (via SH2 domain) with E3 ubiquitin-protein ligase CBL (phosphorylated on 'Tyr-781'); the interaction is enhanced in the presence of EGF and reduces interaction of CBL with EGFR. Interacts (via SH2 domain) with receptor tyrosine kinase MET (when phosphorylated); the interaction increases MET protein stability.</text>
</comment>
<comment type="subcellular location">
    <subcellularLocation>
        <location evidence="2">Cell junction</location>
        <location evidence="2">Focal adhesion</location>
    </subcellularLocation>
    <subcellularLocation>
        <location evidence="2">Cytoplasm</location>
        <location evidence="2">Cytoskeleton</location>
    </subcellularLocation>
</comment>
<comment type="similarity">
    <text evidence="6">Belongs to the PTEN phosphatase protein family.</text>
</comment>
<evidence type="ECO:0000250" key="1"/>
<evidence type="ECO:0000250" key="2">
    <source>
        <dbReference type="UniProtKB" id="Q8IZW8"/>
    </source>
</evidence>
<evidence type="ECO:0000255" key="3"/>
<evidence type="ECO:0000255" key="4">
    <source>
        <dbReference type="PROSITE-ProRule" id="PRU00191"/>
    </source>
</evidence>
<evidence type="ECO:0000256" key="5">
    <source>
        <dbReference type="SAM" id="MobiDB-lite"/>
    </source>
</evidence>
<evidence type="ECO:0000305" key="6"/>
<evidence type="ECO:0000312" key="7">
    <source>
        <dbReference type="EMBL" id="EDM05970.1"/>
    </source>
</evidence>
<protein>
    <recommendedName>
        <fullName>Tensin-4</fullName>
    </recommendedName>
</protein>
<gene>
    <name type="primary">Tns4</name>
</gene>
<proteinExistence type="evidence at transcript level"/>
<name>TENS4_RAT</name>
<dbReference type="EMBL" id="CH473948">
    <property type="protein sequence ID" value="EDM05970.1"/>
    <property type="molecule type" value="Genomic_DNA"/>
</dbReference>
<dbReference type="EMBL" id="BC097378">
    <property type="protein sequence ID" value="AAH97378.1"/>
    <property type="molecule type" value="mRNA"/>
</dbReference>
<dbReference type="RefSeq" id="NP_001020052.1">
    <property type="nucleotide sequence ID" value="NM_001024881.1"/>
</dbReference>
<dbReference type="SMR" id="Q4V8I3"/>
<dbReference type="FunCoup" id="Q4V8I3">
    <property type="interactions" value="44"/>
</dbReference>
<dbReference type="STRING" id="10116.ENSRNOP00000073971"/>
<dbReference type="GlyGen" id="Q4V8I3">
    <property type="glycosylation" value="3 sites"/>
</dbReference>
<dbReference type="PhosphoSitePlus" id="Q4V8I3"/>
<dbReference type="PaxDb" id="10116-ENSRNOP00000029109"/>
<dbReference type="PRIDE" id="Q4V8I3"/>
<dbReference type="Ensembl" id="ENSRNOT00000089131.2">
    <property type="protein sequence ID" value="ENSRNOP00000073971.1"/>
    <property type="gene ID" value="ENSRNOG00000027350.6"/>
</dbReference>
<dbReference type="GeneID" id="303517"/>
<dbReference type="KEGG" id="rno:303517"/>
<dbReference type="UCSC" id="RGD:1310402">
    <property type="organism name" value="rat"/>
</dbReference>
<dbReference type="AGR" id="RGD:1310402"/>
<dbReference type="CTD" id="84951"/>
<dbReference type="RGD" id="1310402">
    <property type="gene designation" value="Tns4"/>
</dbReference>
<dbReference type="eggNOG" id="KOG1930">
    <property type="taxonomic scope" value="Eukaryota"/>
</dbReference>
<dbReference type="GeneTree" id="ENSGT00940000160142"/>
<dbReference type="InParanoid" id="Q4V8I3"/>
<dbReference type="OMA" id="SQPSMKF"/>
<dbReference type="OrthoDB" id="6273691at2759"/>
<dbReference type="PhylomeDB" id="Q4V8I3"/>
<dbReference type="Reactome" id="R-RNO-8875513">
    <property type="pathway name" value="MET interacts with TNS proteins"/>
</dbReference>
<dbReference type="PRO" id="PR:Q4V8I3"/>
<dbReference type="Proteomes" id="UP000002494">
    <property type="component" value="Chromosome 10"/>
</dbReference>
<dbReference type="Proteomes" id="UP000234681">
    <property type="component" value="Chromosome 10"/>
</dbReference>
<dbReference type="Bgee" id="ENSRNOG00000027350">
    <property type="expression patterns" value="Expressed in stomach and 10 other cell types or tissues"/>
</dbReference>
<dbReference type="GO" id="GO:0005856">
    <property type="term" value="C:cytoskeleton"/>
    <property type="evidence" value="ECO:0007669"/>
    <property type="project" value="UniProtKB-SubCell"/>
</dbReference>
<dbReference type="GO" id="GO:0005829">
    <property type="term" value="C:cytosol"/>
    <property type="evidence" value="ECO:0007669"/>
    <property type="project" value="Ensembl"/>
</dbReference>
<dbReference type="GO" id="GO:0005925">
    <property type="term" value="C:focal adhesion"/>
    <property type="evidence" value="ECO:0000266"/>
    <property type="project" value="RGD"/>
</dbReference>
<dbReference type="GO" id="GO:0003779">
    <property type="term" value="F:actin binding"/>
    <property type="evidence" value="ECO:0007669"/>
    <property type="project" value="UniProtKB-KW"/>
</dbReference>
<dbReference type="GO" id="GO:0008104">
    <property type="term" value="P:protein localization"/>
    <property type="evidence" value="ECO:0000266"/>
    <property type="project" value="RGD"/>
</dbReference>
<dbReference type="CDD" id="cd01213">
    <property type="entry name" value="PTB_tensin"/>
    <property type="match status" value="1"/>
</dbReference>
<dbReference type="FunFam" id="3.30.505.10:FF:000002">
    <property type="entry name" value="Tensin 1"/>
    <property type="match status" value="1"/>
</dbReference>
<dbReference type="Gene3D" id="2.30.29.30">
    <property type="entry name" value="Pleckstrin-homology domain (PH domain)/Phosphotyrosine-binding domain (PTB)"/>
    <property type="match status" value="1"/>
</dbReference>
<dbReference type="Gene3D" id="3.30.505.10">
    <property type="entry name" value="SH2 domain"/>
    <property type="match status" value="1"/>
</dbReference>
<dbReference type="InterPro" id="IPR011993">
    <property type="entry name" value="PH-like_dom_sf"/>
</dbReference>
<dbReference type="InterPro" id="IPR013625">
    <property type="entry name" value="PTB"/>
</dbReference>
<dbReference type="InterPro" id="IPR006020">
    <property type="entry name" value="PTB/PI_dom"/>
</dbReference>
<dbReference type="InterPro" id="IPR000980">
    <property type="entry name" value="SH2"/>
</dbReference>
<dbReference type="InterPro" id="IPR036860">
    <property type="entry name" value="SH2_dom_sf"/>
</dbReference>
<dbReference type="InterPro" id="IPR033929">
    <property type="entry name" value="Tensin_PTB"/>
</dbReference>
<dbReference type="InterPro" id="IPR051484">
    <property type="entry name" value="Tensin_PTEN_phosphatase"/>
</dbReference>
<dbReference type="PANTHER" id="PTHR45734">
    <property type="entry name" value="TENSIN"/>
    <property type="match status" value="1"/>
</dbReference>
<dbReference type="PANTHER" id="PTHR45734:SF6">
    <property type="entry name" value="TENSIN-4"/>
    <property type="match status" value="1"/>
</dbReference>
<dbReference type="Pfam" id="PF08416">
    <property type="entry name" value="PTB"/>
    <property type="match status" value="1"/>
</dbReference>
<dbReference type="Pfam" id="PF00017">
    <property type="entry name" value="SH2"/>
    <property type="match status" value="1"/>
</dbReference>
<dbReference type="SMART" id="SM00462">
    <property type="entry name" value="PTB"/>
    <property type="match status" value="1"/>
</dbReference>
<dbReference type="SMART" id="SM00252">
    <property type="entry name" value="SH2"/>
    <property type="match status" value="1"/>
</dbReference>
<dbReference type="SUPFAM" id="SSF50729">
    <property type="entry name" value="PH domain-like"/>
    <property type="match status" value="1"/>
</dbReference>
<dbReference type="SUPFAM" id="SSF55550">
    <property type="entry name" value="SH2 domain"/>
    <property type="match status" value="1"/>
</dbReference>
<dbReference type="PROSITE" id="PS50001">
    <property type="entry name" value="SH2"/>
    <property type="match status" value="1"/>
</dbReference>